<feature type="chain" id="PRO_0000207278" description="Zinc transporter ZupT">
    <location>
        <begin position="1"/>
        <end position="257"/>
    </location>
</feature>
<feature type="transmembrane region" description="Helical" evidence="1">
    <location>
        <begin position="5"/>
        <end position="25"/>
    </location>
</feature>
<feature type="transmembrane region" description="Helical" evidence="1">
    <location>
        <begin position="32"/>
        <end position="52"/>
    </location>
</feature>
<feature type="transmembrane region" description="Helical" evidence="1">
    <location>
        <begin position="61"/>
        <end position="81"/>
    </location>
</feature>
<feature type="transmembrane region" description="Helical" evidence="1">
    <location>
        <begin position="109"/>
        <end position="129"/>
    </location>
</feature>
<feature type="transmembrane region" description="Helical" evidence="1">
    <location>
        <begin position="137"/>
        <end position="157"/>
    </location>
</feature>
<feature type="transmembrane region" description="Helical" evidence="1">
    <location>
        <begin position="171"/>
        <end position="191"/>
    </location>
</feature>
<feature type="transmembrane region" description="Helical" evidence="1">
    <location>
        <begin position="195"/>
        <end position="215"/>
    </location>
</feature>
<feature type="transmembrane region" description="Helical" evidence="1">
    <location>
        <begin position="236"/>
        <end position="256"/>
    </location>
</feature>
<feature type="binding site" description="M2 metal binding site" evidence="1">
    <location>
        <position position="120"/>
    </location>
    <ligand>
        <name>Fe(2+)</name>
        <dbReference type="ChEBI" id="CHEBI:29033"/>
    </ligand>
</feature>
<feature type="binding site" description="M2 metal binding site" evidence="1">
    <location>
        <position position="123"/>
    </location>
    <ligand>
        <name>Fe(2+)</name>
        <dbReference type="ChEBI" id="CHEBI:29033"/>
    </ligand>
</feature>
<feature type="binding site" description="M1 metal binding site" evidence="1">
    <location>
        <position position="123"/>
    </location>
    <ligand>
        <name>Zn(2+)</name>
        <dbReference type="ChEBI" id="CHEBI:29105"/>
    </ligand>
</feature>
<feature type="binding site" description="M1 metal binding site" evidence="1">
    <location>
        <position position="148"/>
    </location>
    <ligand>
        <name>Zn(2+)</name>
        <dbReference type="ChEBI" id="CHEBI:29105"/>
    </ligand>
</feature>
<feature type="binding site" description="M2 metal binding site" evidence="1">
    <location>
        <position position="149"/>
    </location>
    <ligand>
        <name>Fe(2+)</name>
        <dbReference type="ChEBI" id="CHEBI:29033"/>
    </ligand>
</feature>
<feature type="binding site" description="M2 metal binding site" evidence="1">
    <location>
        <position position="152"/>
    </location>
    <ligand>
        <name>Fe(2+)</name>
        <dbReference type="ChEBI" id="CHEBI:29033"/>
    </ligand>
</feature>
<feature type="binding site" description="M1 metal binding site" evidence="1">
    <location>
        <position position="152"/>
    </location>
    <ligand>
        <name>Zn(2+)</name>
        <dbReference type="ChEBI" id="CHEBI:29105"/>
    </ligand>
</feature>
<feature type="binding site" description="M2 metal binding site" evidence="1">
    <location>
        <position position="181"/>
    </location>
    <ligand>
        <name>Fe(2+)</name>
        <dbReference type="ChEBI" id="CHEBI:29033"/>
    </ligand>
</feature>
<dbReference type="EMBL" id="AL513382">
    <property type="protein sequence ID" value="CAD07716.1"/>
    <property type="molecule type" value="Genomic_DNA"/>
</dbReference>
<dbReference type="EMBL" id="AE014613">
    <property type="protein sequence ID" value="AAO70654.1"/>
    <property type="molecule type" value="Genomic_DNA"/>
</dbReference>
<dbReference type="RefSeq" id="NP_457582.1">
    <property type="nucleotide sequence ID" value="NC_003198.1"/>
</dbReference>
<dbReference type="RefSeq" id="WP_000115874.1">
    <property type="nucleotide sequence ID" value="NZ_WSUR01000003.1"/>
</dbReference>
<dbReference type="SMR" id="P67471"/>
<dbReference type="STRING" id="220341.gene:17587225"/>
<dbReference type="KEGG" id="stt:t3111"/>
<dbReference type="KEGG" id="sty:STY3368"/>
<dbReference type="PATRIC" id="fig|220341.7.peg.3429"/>
<dbReference type="eggNOG" id="COG0428">
    <property type="taxonomic scope" value="Bacteria"/>
</dbReference>
<dbReference type="HOGENOM" id="CLU_015114_1_3_6"/>
<dbReference type="OMA" id="HESTGPC"/>
<dbReference type="OrthoDB" id="9787346at2"/>
<dbReference type="Proteomes" id="UP000000541">
    <property type="component" value="Chromosome"/>
</dbReference>
<dbReference type="Proteomes" id="UP000002670">
    <property type="component" value="Chromosome"/>
</dbReference>
<dbReference type="GO" id="GO:0005886">
    <property type="term" value="C:plasma membrane"/>
    <property type="evidence" value="ECO:0007669"/>
    <property type="project" value="UniProtKB-SubCell"/>
</dbReference>
<dbReference type="GO" id="GO:0046872">
    <property type="term" value="F:metal ion binding"/>
    <property type="evidence" value="ECO:0007669"/>
    <property type="project" value="UniProtKB-KW"/>
</dbReference>
<dbReference type="GO" id="GO:0005385">
    <property type="term" value="F:zinc ion transmembrane transporter activity"/>
    <property type="evidence" value="ECO:0007669"/>
    <property type="project" value="UniProtKB-UniRule"/>
</dbReference>
<dbReference type="HAMAP" id="MF_00548">
    <property type="entry name" value="ZupT"/>
    <property type="match status" value="1"/>
</dbReference>
<dbReference type="InterPro" id="IPR003689">
    <property type="entry name" value="ZIP"/>
</dbReference>
<dbReference type="InterPro" id="IPR023498">
    <property type="entry name" value="Zn_transptr_ZupT"/>
</dbReference>
<dbReference type="NCBIfam" id="NF003243">
    <property type="entry name" value="PRK04201.1"/>
    <property type="match status" value="1"/>
</dbReference>
<dbReference type="PANTHER" id="PTHR11040:SF205">
    <property type="entry name" value="ZINC TRANSPORTER ZUPT"/>
    <property type="match status" value="1"/>
</dbReference>
<dbReference type="PANTHER" id="PTHR11040">
    <property type="entry name" value="ZINC/IRON TRANSPORTER"/>
    <property type="match status" value="1"/>
</dbReference>
<dbReference type="Pfam" id="PF02535">
    <property type="entry name" value="Zip"/>
    <property type="match status" value="2"/>
</dbReference>
<sequence>MSVPLILTLLAGAATFIGAFLGVLGQKPSNRVLAFSLGFAAGIMLLISLMEMLPAALDTEGMSPVLGYGMFIIGLLGYFGLDRLLPHAHPQDLVQKRQQPLPGSIKRTAILLTLGISLHNFPEGIATFVTASSNLELGFGIALAVALHNIPEGLAVAGPVYAATGSKRTAIFWAGISGMAEILGGVLAWLILGSLVSPIVMAAIMAAVAGIMVALSVDELMPLAKEIDPNNNPSYGVLCGMSIMGLSLVILQTIGIG</sequence>
<comment type="function">
    <text evidence="1">Mediates zinc uptake. May also transport other divalent cations.</text>
</comment>
<comment type="catalytic activity">
    <reaction evidence="1">
        <text>Zn(2+)(in) = Zn(2+)(out)</text>
        <dbReference type="Rhea" id="RHEA:29351"/>
        <dbReference type="ChEBI" id="CHEBI:29105"/>
    </reaction>
</comment>
<comment type="subcellular location">
    <subcellularLocation>
        <location evidence="1">Cell inner membrane</location>
        <topology evidence="1 2">Multi-pass membrane protein</topology>
    </subcellularLocation>
</comment>
<comment type="similarity">
    <text evidence="1 2">Belongs to the ZIP transporter (TC 2.A.5) family. ZupT subfamily.</text>
</comment>
<reference key="1">
    <citation type="journal article" date="2001" name="Nature">
        <title>Complete genome sequence of a multiple drug resistant Salmonella enterica serovar Typhi CT18.</title>
        <authorList>
            <person name="Parkhill J."/>
            <person name="Dougan G."/>
            <person name="James K.D."/>
            <person name="Thomson N.R."/>
            <person name="Pickard D."/>
            <person name="Wain J."/>
            <person name="Churcher C.M."/>
            <person name="Mungall K.L."/>
            <person name="Bentley S.D."/>
            <person name="Holden M.T.G."/>
            <person name="Sebaihia M."/>
            <person name="Baker S."/>
            <person name="Basham D."/>
            <person name="Brooks K."/>
            <person name="Chillingworth T."/>
            <person name="Connerton P."/>
            <person name="Cronin A."/>
            <person name="Davis P."/>
            <person name="Davies R.M."/>
            <person name="Dowd L."/>
            <person name="White N."/>
            <person name="Farrar J."/>
            <person name="Feltwell T."/>
            <person name="Hamlin N."/>
            <person name="Haque A."/>
            <person name="Hien T.T."/>
            <person name="Holroyd S."/>
            <person name="Jagels K."/>
            <person name="Krogh A."/>
            <person name="Larsen T.S."/>
            <person name="Leather S."/>
            <person name="Moule S."/>
            <person name="O'Gaora P."/>
            <person name="Parry C."/>
            <person name="Quail M.A."/>
            <person name="Rutherford K.M."/>
            <person name="Simmonds M."/>
            <person name="Skelton J."/>
            <person name="Stevens K."/>
            <person name="Whitehead S."/>
            <person name="Barrell B.G."/>
        </authorList>
    </citation>
    <scope>NUCLEOTIDE SEQUENCE [LARGE SCALE GENOMIC DNA]</scope>
    <source>
        <strain>CT18</strain>
    </source>
</reference>
<reference key="2">
    <citation type="journal article" date="2003" name="J. Bacteriol.">
        <title>Comparative genomics of Salmonella enterica serovar Typhi strains Ty2 and CT18.</title>
        <authorList>
            <person name="Deng W."/>
            <person name="Liou S.-R."/>
            <person name="Plunkett G. III"/>
            <person name="Mayhew G.F."/>
            <person name="Rose D.J."/>
            <person name="Burland V."/>
            <person name="Kodoyianni V."/>
            <person name="Schwartz D.C."/>
            <person name="Blattner F.R."/>
        </authorList>
    </citation>
    <scope>NUCLEOTIDE SEQUENCE [LARGE SCALE GENOMIC DNA]</scope>
    <source>
        <strain>ATCC 700931 / Ty2</strain>
    </source>
</reference>
<organism>
    <name type="scientific">Salmonella typhi</name>
    <dbReference type="NCBI Taxonomy" id="90370"/>
    <lineage>
        <taxon>Bacteria</taxon>
        <taxon>Pseudomonadati</taxon>
        <taxon>Pseudomonadota</taxon>
        <taxon>Gammaproteobacteria</taxon>
        <taxon>Enterobacterales</taxon>
        <taxon>Enterobacteriaceae</taxon>
        <taxon>Salmonella</taxon>
    </lineage>
</organism>
<keyword id="KW-0997">Cell inner membrane</keyword>
<keyword id="KW-1003">Cell membrane</keyword>
<keyword id="KW-0406">Ion transport</keyword>
<keyword id="KW-0408">Iron</keyword>
<keyword id="KW-0472">Membrane</keyword>
<keyword id="KW-0479">Metal-binding</keyword>
<keyword id="KW-0812">Transmembrane</keyword>
<keyword id="KW-1133">Transmembrane helix</keyword>
<keyword id="KW-0813">Transport</keyword>
<keyword id="KW-0862">Zinc</keyword>
<keyword id="KW-0864">Zinc transport</keyword>
<accession>P67471</accession>
<accession>Q8XGR4</accession>
<proteinExistence type="inferred from homology"/>
<gene>
    <name evidence="1" type="primary">zupT</name>
    <name type="ordered locus">STY3368</name>
    <name type="ordered locus">t3111</name>
</gene>
<name>ZUPT_SALTI</name>
<protein>
    <recommendedName>
        <fullName evidence="1">Zinc transporter ZupT</fullName>
    </recommendedName>
</protein>
<evidence type="ECO:0000255" key="1">
    <source>
        <dbReference type="HAMAP-Rule" id="MF_00548"/>
    </source>
</evidence>
<evidence type="ECO:0000305" key="2"/>